<accession>Q9E6P0</accession>
<sequence length="1191" mass="130715">MDGVGKSVKLCGGPIGYIYATPKCSVPVDELAILAAKSNDCDDAVLPLVAGLTVESDFVWNVAAVAGTKTTGLGSGGTTLKLVPTHYHPCVFVFYGGDCIKPCTKAPNLTKACDLARERFGYSAYSSPAPTAFETTGQQICEALEMDAQNVMLYLVVTELFKEVIYLCNSFLHFGGSDVVTINNADVRRIPIYPLHLVLPDFNRITNEPFSEKPRALGEGAIMPKAFYNDSLCRLLHGYVLSTTAVGLRVRNIDAIARGAAHLCFDENHEGTLLPADTTFTAFTPAAETTKGQSKMGKREGSDVSGGGYERRTASLMASDATLAIENVISASVYEDPIPDVNKWPIYCNPVGYADRIEALSAYMARVAGLVGAMVFSSNSVIYMTEVGEAGSTEGKETSTTAPSFYRFFQIAAPHLSANPLVDRDGKPVSGENLSKSTSASQSEYSLDYLILACGFCPQLLARFLFYLERCDGGAKACHHDLDTVKFVSSAIDADMPCELCDKTSRIYCAHTTIKRLVYRLPKFGYQMRGAMGLFGAMTNNYCDVNALGSYAQFSTLKRSEGEASRSVMQDTYRLTVERMMKALEKEGLLTCDDPTNMASADANIRDGNSFIRAISTMKNIIESEASQLMRNLTEIREYNIREGLGDANHTLSLAVEPYASGICPVLAFLSRRTIIAVVQDMALSQCSIVMQGQQVEARNFRTQFQAVLKRRVLELQNAGFITSKTITVTLEDQQICVPDPSKSQYDSVISNMEGDLVKVTVEIFRELKVKNKVLFGGGIAGAASEATKSRLAGMVEAYQRPTKTMHVLNGPLGFAVKRYHTLLFPDVKMPNGATPNALWFWILLLRNQLPAGILSKEEEDKSLFIKKFTKSYADMNYINISPTCFGDLAQFYLANTILKYCSHKHFFINTISALVAVSRRPRDPAIVLPWIERPITKGQDVAPAAQQLIASMSDHKDIWCATFSSTNLVGSIMTTKPFVVIGISISKYHGMAGSTKVFQSGNWGNIMGGRNVCSLMSFDRTHRYVMTCPRVGFVAEQPIFSSGIKETTLIDRVRMVLSEESAAPHAAVYMLALKMVGDRVRQMELEDWMEITNDEYISSLIDELNKQVEEAEGGWNADAAMTLAKEMVNMAMSIPTDGPTFDFDACDENLEGHADGQTISETNLKRPNMNVFDLEPIPEKRVPVLSVDML</sequence>
<name>DNBI_GAHVM</name>
<organism>
    <name type="scientific">Gallid herpesvirus 2 (strain Chicken/Md5/ATCC VR-987)</name>
    <name type="common">GaHV-2</name>
    <name type="synonym">Marek's disease herpesvirus type 1</name>
    <dbReference type="NCBI Taxonomy" id="10389"/>
    <lineage>
        <taxon>Viruses</taxon>
        <taxon>Duplodnaviria</taxon>
        <taxon>Heunggongvirae</taxon>
        <taxon>Peploviricota</taxon>
        <taxon>Herviviricetes</taxon>
        <taxon>Herpesvirales</taxon>
        <taxon>Orthoherpesviridae</taxon>
        <taxon>Alphaherpesvirinae</taxon>
        <taxon>Mardivirus</taxon>
        <taxon>Mardivirus gallidalpha2</taxon>
        <taxon>Gallid alphaherpesvirus 2</taxon>
    </lineage>
</organism>
<reference key="1">
    <citation type="journal article" date="2000" name="J. Virol.">
        <title>The genome of a very virulent Marek's disease virus.</title>
        <authorList>
            <person name="Tulman E.R."/>
            <person name="Afonso C.L."/>
            <person name="Lu Z."/>
            <person name="Zsak L."/>
            <person name="Rock D.L."/>
            <person name="Kutish G.F."/>
        </authorList>
    </citation>
    <scope>NUCLEOTIDE SEQUENCE [LARGE SCALE GENOMIC DNA]</scope>
</reference>
<gene>
    <name evidence="1" type="primary">DBP</name>
    <name type="synonym">MDV042</name>
</gene>
<comment type="function">
    <text evidence="1">Plays several crucial roles in viral infection. Participates in the opening of the viral DNA origin to initiate replication by interacting with the origin-binding protein. May disrupt loops, hairpins and other secondary structures present on ssDNA to reduce and eliminate pausing of viral DNA polymerase at specific sites during elongation. Promotes viral DNA recombination by performing strand-transfer, characterized by the ability to transfer a DNA strand from a linear duplex to a complementary single-stranded DNA circle. Can also catalyze the renaturation of complementary single strands. Additionally, reorganizes the host cell nucleus, leading to the formation of prereplicative sites and replication compartments. This process is driven by the protein which can form double-helical filaments in the absence of DNA.</text>
</comment>
<comment type="subunit">
    <text evidence="1">Homooligomers. Forms double-helical filaments necessary for the formation of replication compartments within the host nucleus. Interacts with the origin-binding protein. Interacts with the helicase primase complex; this interaction stimulates primer synthesis activity of the helicase-primase complex. Interacts with the DNA polymerase. Interacts with the alkaline exonuclease; this interaction increases its nuclease processivity.</text>
</comment>
<comment type="subcellular location">
    <subcellularLocation>
        <location evidence="1">Host nucleus</location>
    </subcellularLocation>
    <text evidence="1">In the absence of DNA replication, found in the nuclear framework-associated structures (prereplicative sites). As viral DNA replication proceeds, it migrates to globular intranuclear structures (replication compartments).</text>
</comment>
<comment type="similarity">
    <text evidence="1">Belongs to the herpesviridae major DNA-binding protein family.</text>
</comment>
<dbReference type="EMBL" id="AF243438">
    <property type="protein sequence ID" value="AAG14222.1"/>
    <property type="molecule type" value="Genomic_DNA"/>
</dbReference>
<dbReference type="RefSeq" id="YP_001033958.1">
    <property type="nucleotide sequence ID" value="NC_002229.3"/>
</dbReference>
<dbReference type="SMR" id="Q9E6P0"/>
<dbReference type="GeneID" id="4811503"/>
<dbReference type="KEGG" id="vg:4811503"/>
<dbReference type="Proteomes" id="UP000008072">
    <property type="component" value="Segment"/>
</dbReference>
<dbReference type="GO" id="GO:0042025">
    <property type="term" value="C:host cell nucleus"/>
    <property type="evidence" value="ECO:0007669"/>
    <property type="project" value="UniProtKB-SubCell"/>
</dbReference>
<dbReference type="GO" id="GO:0003697">
    <property type="term" value="F:single-stranded DNA binding"/>
    <property type="evidence" value="ECO:0007669"/>
    <property type="project" value="InterPro"/>
</dbReference>
<dbReference type="GO" id="GO:0008270">
    <property type="term" value="F:zinc ion binding"/>
    <property type="evidence" value="ECO:0007669"/>
    <property type="project" value="UniProtKB-KW"/>
</dbReference>
<dbReference type="GO" id="GO:0006260">
    <property type="term" value="P:DNA replication"/>
    <property type="evidence" value="ECO:0007669"/>
    <property type="project" value="UniProtKB-KW"/>
</dbReference>
<dbReference type="Gene3D" id="1.10.150.560">
    <property type="match status" value="1"/>
</dbReference>
<dbReference type="Gene3D" id="1.20.190.40">
    <property type="entry name" value="Viral ssDNA binding protein, head domain"/>
    <property type="match status" value="2"/>
</dbReference>
<dbReference type="HAMAP" id="MF_04007">
    <property type="entry name" value="HSV_DNBI"/>
    <property type="match status" value="1"/>
</dbReference>
<dbReference type="InterPro" id="IPR035989">
    <property type="entry name" value="DBP_sf"/>
</dbReference>
<dbReference type="InterPro" id="IPR043031">
    <property type="entry name" value="Viral_ssDBP_head"/>
</dbReference>
<dbReference type="InterPro" id="IPR000635">
    <property type="entry name" value="Viral_ssDNA-bd"/>
</dbReference>
<dbReference type="Pfam" id="PF00747">
    <property type="entry name" value="Viral_DNA_bp"/>
    <property type="match status" value="1"/>
</dbReference>
<dbReference type="SUPFAM" id="SSF118208">
    <property type="entry name" value="Viral ssDNA binding protein"/>
    <property type="match status" value="1"/>
</dbReference>
<evidence type="ECO:0000255" key="1">
    <source>
        <dbReference type="HAMAP-Rule" id="MF_04007"/>
    </source>
</evidence>
<evidence type="ECO:0000256" key="2">
    <source>
        <dbReference type="SAM" id="MobiDB-lite"/>
    </source>
</evidence>
<proteinExistence type="inferred from homology"/>
<organismHost>
    <name type="scientific">Gallus gallus</name>
    <name type="common">Chicken</name>
    <dbReference type="NCBI Taxonomy" id="9031"/>
</organismHost>
<keyword id="KW-0235">DNA replication</keyword>
<keyword id="KW-0238">DNA-binding</keyword>
<keyword id="KW-1048">Host nucleus</keyword>
<keyword id="KW-0479">Metal-binding</keyword>
<keyword id="KW-1185">Reference proteome</keyword>
<keyword id="KW-0862">Zinc</keyword>
<keyword id="KW-0863">Zinc-finger</keyword>
<feature type="chain" id="PRO_0000406582" description="Major DNA-binding protein">
    <location>
        <begin position="1"/>
        <end position="1191"/>
    </location>
</feature>
<feature type="zinc finger region" evidence="1">
    <location>
        <begin position="498"/>
        <end position="511"/>
    </location>
</feature>
<feature type="region of interest" description="Disordered" evidence="2">
    <location>
        <begin position="288"/>
        <end position="307"/>
    </location>
</feature>
<feature type="region of interest" description="Required for nuclear localization" evidence="1">
    <location>
        <begin position="1166"/>
        <end position="1191"/>
    </location>
</feature>
<feature type="short sequence motif" description="Required for filament formation" evidence="1">
    <location>
        <begin position="841"/>
        <end position="842"/>
    </location>
</feature>
<protein>
    <recommendedName>
        <fullName evidence="1">Major DNA-binding protein</fullName>
    </recommendedName>
</protein>